<feature type="propeptide" id="PRO_0000459867" evidence="1">
    <location>
        <begin position="1"/>
        <end position="9"/>
    </location>
</feature>
<feature type="chain" id="PRO_1000128695" description="Large ribosomal subunit protein bL27">
    <location>
        <begin position="10"/>
        <end position="96"/>
    </location>
</feature>
<feature type="region of interest" description="Disordered" evidence="3">
    <location>
        <begin position="14"/>
        <end position="36"/>
    </location>
</feature>
<sequence>MLRLDLQFFASKKGVGSTKNGRDSQSKRLGAKRADGQTVSGGSILYRQRGTKIYPGVNVGRGGDDTLYAKVDGVVRFERLGRDRKQVSVYPVAQEA</sequence>
<organism>
    <name type="scientific">Bacillus mycoides (strain KBAB4)</name>
    <name type="common">Bacillus weihenstephanensis</name>
    <dbReference type="NCBI Taxonomy" id="315730"/>
    <lineage>
        <taxon>Bacteria</taxon>
        <taxon>Bacillati</taxon>
        <taxon>Bacillota</taxon>
        <taxon>Bacilli</taxon>
        <taxon>Bacillales</taxon>
        <taxon>Bacillaceae</taxon>
        <taxon>Bacillus</taxon>
        <taxon>Bacillus cereus group</taxon>
    </lineage>
</organism>
<proteinExistence type="inferred from homology"/>
<reference key="1">
    <citation type="journal article" date="2008" name="Chem. Biol. Interact.">
        <title>Extending the Bacillus cereus group genomics to putative food-borne pathogens of different toxicity.</title>
        <authorList>
            <person name="Lapidus A."/>
            <person name="Goltsman E."/>
            <person name="Auger S."/>
            <person name="Galleron N."/>
            <person name="Segurens B."/>
            <person name="Dossat C."/>
            <person name="Land M.L."/>
            <person name="Broussolle V."/>
            <person name="Brillard J."/>
            <person name="Guinebretiere M.-H."/>
            <person name="Sanchis V."/>
            <person name="Nguen-the C."/>
            <person name="Lereclus D."/>
            <person name="Richardson P."/>
            <person name="Wincker P."/>
            <person name="Weissenbach J."/>
            <person name="Ehrlich S.D."/>
            <person name="Sorokin A."/>
        </authorList>
    </citation>
    <scope>NUCLEOTIDE SEQUENCE [LARGE SCALE GENOMIC DNA]</scope>
    <source>
        <strain>KBAB4</strain>
    </source>
</reference>
<gene>
    <name evidence="2" type="primary">rpmA</name>
    <name type="ordered locus">BcerKBAB4_4288</name>
</gene>
<evidence type="ECO:0000250" key="1">
    <source>
        <dbReference type="UniProtKB" id="Q2FXT0"/>
    </source>
</evidence>
<evidence type="ECO:0000255" key="2">
    <source>
        <dbReference type="HAMAP-Rule" id="MF_00539"/>
    </source>
</evidence>
<evidence type="ECO:0000256" key="3">
    <source>
        <dbReference type="SAM" id="MobiDB-lite"/>
    </source>
</evidence>
<evidence type="ECO:0000305" key="4"/>
<dbReference type="EMBL" id="CP000903">
    <property type="protein sequence ID" value="ABY45447.1"/>
    <property type="molecule type" value="Genomic_DNA"/>
</dbReference>
<dbReference type="RefSeq" id="WP_000944957.1">
    <property type="nucleotide sequence ID" value="NZ_CAKMRX030000033.1"/>
</dbReference>
<dbReference type="SMR" id="A9VIR7"/>
<dbReference type="GeneID" id="92884982"/>
<dbReference type="KEGG" id="bwe:BcerKBAB4_4288"/>
<dbReference type="eggNOG" id="COG0211">
    <property type="taxonomic scope" value="Bacteria"/>
</dbReference>
<dbReference type="HOGENOM" id="CLU_095424_4_0_9"/>
<dbReference type="Proteomes" id="UP000002154">
    <property type="component" value="Chromosome"/>
</dbReference>
<dbReference type="GO" id="GO:0022625">
    <property type="term" value="C:cytosolic large ribosomal subunit"/>
    <property type="evidence" value="ECO:0007669"/>
    <property type="project" value="TreeGrafter"/>
</dbReference>
<dbReference type="GO" id="GO:0003735">
    <property type="term" value="F:structural constituent of ribosome"/>
    <property type="evidence" value="ECO:0007669"/>
    <property type="project" value="InterPro"/>
</dbReference>
<dbReference type="GO" id="GO:0006412">
    <property type="term" value="P:translation"/>
    <property type="evidence" value="ECO:0007669"/>
    <property type="project" value="UniProtKB-UniRule"/>
</dbReference>
<dbReference type="FunFam" id="2.40.50.100:FF:000004">
    <property type="entry name" value="50S ribosomal protein L27"/>
    <property type="match status" value="1"/>
</dbReference>
<dbReference type="Gene3D" id="2.40.50.100">
    <property type="match status" value="1"/>
</dbReference>
<dbReference type="HAMAP" id="MF_00539">
    <property type="entry name" value="Ribosomal_bL27"/>
    <property type="match status" value="1"/>
</dbReference>
<dbReference type="InterPro" id="IPR001684">
    <property type="entry name" value="Ribosomal_bL27"/>
</dbReference>
<dbReference type="InterPro" id="IPR018261">
    <property type="entry name" value="Ribosomal_bL27_CS"/>
</dbReference>
<dbReference type="NCBIfam" id="TIGR00062">
    <property type="entry name" value="L27"/>
    <property type="match status" value="1"/>
</dbReference>
<dbReference type="PANTHER" id="PTHR15893:SF0">
    <property type="entry name" value="LARGE RIBOSOMAL SUBUNIT PROTEIN BL27M"/>
    <property type="match status" value="1"/>
</dbReference>
<dbReference type="PANTHER" id="PTHR15893">
    <property type="entry name" value="RIBOSOMAL PROTEIN L27"/>
    <property type="match status" value="1"/>
</dbReference>
<dbReference type="Pfam" id="PF01016">
    <property type="entry name" value="Ribosomal_L27"/>
    <property type="match status" value="1"/>
</dbReference>
<dbReference type="PRINTS" id="PR00063">
    <property type="entry name" value="RIBOSOMALL27"/>
</dbReference>
<dbReference type="SUPFAM" id="SSF110324">
    <property type="entry name" value="Ribosomal L27 protein-like"/>
    <property type="match status" value="1"/>
</dbReference>
<dbReference type="PROSITE" id="PS00831">
    <property type="entry name" value="RIBOSOMAL_L27"/>
    <property type="match status" value="1"/>
</dbReference>
<comment type="PTM">
    <text evidence="1">The N-terminus is cleaved by ribosomal processing cysteine protease Prp.</text>
</comment>
<comment type="similarity">
    <text evidence="2">Belongs to the bacterial ribosomal protein bL27 family.</text>
</comment>
<protein>
    <recommendedName>
        <fullName evidence="2">Large ribosomal subunit protein bL27</fullName>
    </recommendedName>
    <alternativeName>
        <fullName evidence="4">50S ribosomal protein L27</fullName>
    </alternativeName>
</protein>
<accession>A9VIR7</accession>
<name>RL27_BACMK</name>
<keyword id="KW-0687">Ribonucleoprotein</keyword>
<keyword id="KW-0689">Ribosomal protein</keyword>